<dbReference type="EC" id="7.1.1.-" evidence="1"/>
<dbReference type="EMBL" id="EF380352">
    <property type="protein sequence ID" value="ABQ43304.1"/>
    <property type="molecule type" value="Genomic_DNA"/>
</dbReference>
<dbReference type="SMR" id="P0CC44"/>
<dbReference type="GO" id="GO:0009535">
    <property type="term" value="C:chloroplast thylakoid membrane"/>
    <property type="evidence" value="ECO:0007669"/>
    <property type="project" value="UniProtKB-SubCell"/>
</dbReference>
<dbReference type="GO" id="GO:0008137">
    <property type="term" value="F:NADH dehydrogenase (ubiquinone) activity"/>
    <property type="evidence" value="ECO:0007669"/>
    <property type="project" value="InterPro"/>
</dbReference>
<dbReference type="GO" id="GO:0048038">
    <property type="term" value="F:quinone binding"/>
    <property type="evidence" value="ECO:0007669"/>
    <property type="project" value="UniProtKB-KW"/>
</dbReference>
<dbReference type="GO" id="GO:0042773">
    <property type="term" value="P:ATP synthesis coupled electron transport"/>
    <property type="evidence" value="ECO:0007669"/>
    <property type="project" value="InterPro"/>
</dbReference>
<dbReference type="GO" id="GO:0019684">
    <property type="term" value="P:photosynthesis, light reaction"/>
    <property type="evidence" value="ECO:0007669"/>
    <property type="project" value="UniProtKB-UniRule"/>
</dbReference>
<dbReference type="HAMAP" id="MF_00445">
    <property type="entry name" value="NDH1_NuoN_1"/>
    <property type="match status" value="1"/>
</dbReference>
<dbReference type="InterPro" id="IPR010096">
    <property type="entry name" value="NADH-Q_OxRdtase_suN/2"/>
</dbReference>
<dbReference type="InterPro" id="IPR001750">
    <property type="entry name" value="ND/Mrp_TM"/>
</dbReference>
<dbReference type="InterPro" id="IPR045693">
    <property type="entry name" value="Ndh2_N"/>
</dbReference>
<dbReference type="NCBIfam" id="TIGR01770">
    <property type="entry name" value="NDH_I_N"/>
    <property type="match status" value="1"/>
</dbReference>
<dbReference type="NCBIfam" id="NF002701">
    <property type="entry name" value="PRK02504.1"/>
    <property type="match status" value="1"/>
</dbReference>
<dbReference type="PANTHER" id="PTHR22773">
    <property type="entry name" value="NADH DEHYDROGENASE"/>
    <property type="match status" value="1"/>
</dbReference>
<dbReference type="Pfam" id="PF19530">
    <property type="entry name" value="Ndh2_N"/>
    <property type="match status" value="1"/>
</dbReference>
<dbReference type="Pfam" id="PF00361">
    <property type="entry name" value="Proton_antipo_M"/>
    <property type="match status" value="1"/>
</dbReference>
<dbReference type="PRINTS" id="PR01434">
    <property type="entry name" value="NADHDHGNASE5"/>
</dbReference>
<reference key="1">
    <citation type="journal article" date="2007" name="Mol. Phylogenet. Evol.">
        <title>Phylogenetic and evolutionary implications of complete chloroplast genome sequences of four early-diverging angiosperms: Buxus (Buxaceae), Chloranthus (Chloranthaceae), Dioscorea (Dioscoreaceae), and Illicium (Schisandraceae).</title>
        <authorList>
            <person name="Hansen D.R."/>
            <person name="Dastidar S.G."/>
            <person name="Cai Z."/>
            <person name="Penaflor C."/>
            <person name="Kuehl J.V."/>
            <person name="Boore J.L."/>
            <person name="Jansen R.K."/>
        </authorList>
    </citation>
    <scope>NUCLEOTIDE SEQUENCE [LARGE SCALE GENOMIC DNA]</scope>
</reference>
<evidence type="ECO:0000255" key="1">
    <source>
        <dbReference type="HAMAP-Rule" id="MF_00445"/>
    </source>
</evidence>
<sequence>MIWHVQNENFILDSTRIFMKAFHLLLFHGSFIFPECILIFGLILLLMIDSTSDQKDIPWLYFISSTSLVMSITALLFRWREEPMISFSGNFQTNNFNEIFQFLILLCSTLCIPLSVEYIECTEMAITEFLLFVLTATLGGMFLCGANDSITIFVAPECFSLCSYLLSGYTKRDVRSNEATTKYLLMGGASSSILVHGFSWLYGSSGGEIELQEIVNGLINTQMYNSPGISIALISITVGIGFKLSPAPSHQWTPDVYEGSPTPVVAFLSVTSKVAASASATRIFDIPFYFSSNEWHLLLEILAILSMILGNLIAITQTSMKRMLAYSSIGQIGYVIIGIIVGDSNDGYASMITYMLFYISMNLGTFARIVSFGLRTGTDNIRDYAGLYTKDPFLALSSALCLLSLGGLPPLAGFFGKLHLFWCGWQAGLYFLVSIGLLTSVVSIYYYLKIIKLLMTGRNQEITPHVRNYRRSPLRSNNSIELSMIVCVIASTIPGISMNPIIAIAQDTLF</sequence>
<gene>
    <name evidence="1" type="primary">ndhB1</name>
</gene>
<protein>
    <recommendedName>
        <fullName evidence="1">NAD(P)H-quinone oxidoreductase subunit 2 A, chloroplastic</fullName>
        <ecNumber evidence="1">7.1.1.-</ecNumber>
    </recommendedName>
    <alternativeName>
        <fullName evidence="1">NAD(P)H dehydrogenase, subunit 2 A</fullName>
    </alternativeName>
    <alternativeName>
        <fullName evidence="1">NADH-plastoquinone oxidoreductase subunit 2 A</fullName>
    </alternativeName>
</protein>
<proteinExistence type="inferred from homology"/>
<accession>P0CC44</accession>
<accession>A6MMG7</accession>
<feature type="chain" id="PRO_0000344263" description="NAD(P)H-quinone oxidoreductase subunit 2 A, chloroplastic">
    <location>
        <begin position="1"/>
        <end position="510"/>
    </location>
</feature>
<feature type="transmembrane region" description="Helical" evidence="1">
    <location>
        <begin position="24"/>
        <end position="44"/>
    </location>
</feature>
<feature type="transmembrane region" description="Helical" evidence="1">
    <location>
        <begin position="57"/>
        <end position="77"/>
    </location>
</feature>
<feature type="transmembrane region" description="Helical" evidence="1">
    <location>
        <begin position="99"/>
        <end position="119"/>
    </location>
</feature>
<feature type="transmembrane region" description="Helical" evidence="1">
    <location>
        <begin position="124"/>
        <end position="144"/>
    </location>
</feature>
<feature type="transmembrane region" description="Helical" evidence="1">
    <location>
        <begin position="150"/>
        <end position="170"/>
    </location>
</feature>
<feature type="transmembrane region" description="Helical" evidence="1">
    <location>
        <begin position="183"/>
        <end position="203"/>
    </location>
</feature>
<feature type="transmembrane region" description="Helical" evidence="1">
    <location>
        <begin position="227"/>
        <end position="247"/>
    </location>
</feature>
<feature type="transmembrane region" description="Helical" evidence="1">
    <location>
        <begin position="295"/>
        <end position="315"/>
    </location>
</feature>
<feature type="transmembrane region" description="Helical" evidence="1">
    <location>
        <begin position="323"/>
        <end position="343"/>
    </location>
</feature>
<feature type="transmembrane region" description="Helical" evidence="1">
    <location>
        <begin position="347"/>
        <end position="367"/>
    </location>
</feature>
<feature type="transmembrane region" description="Helical" evidence="1">
    <location>
        <begin position="395"/>
        <end position="415"/>
    </location>
</feature>
<feature type="transmembrane region" description="Helical" evidence="1">
    <location>
        <begin position="418"/>
        <end position="438"/>
    </location>
</feature>
<feature type="transmembrane region" description="Helical" evidence="1">
    <location>
        <begin position="484"/>
        <end position="504"/>
    </location>
</feature>
<comment type="function">
    <text evidence="1">NDH shuttles electrons from NAD(P)H:plastoquinone, via FMN and iron-sulfur (Fe-S) centers, to quinones in the photosynthetic chain and possibly in a chloroplast respiratory chain. The immediate electron acceptor for the enzyme in this species is believed to be plastoquinone. Couples the redox reaction to proton translocation, and thus conserves the redox energy in a proton gradient.</text>
</comment>
<comment type="catalytic activity">
    <reaction evidence="1">
        <text>a plastoquinone + NADH + (n+1) H(+)(in) = a plastoquinol + NAD(+) + n H(+)(out)</text>
        <dbReference type="Rhea" id="RHEA:42608"/>
        <dbReference type="Rhea" id="RHEA-COMP:9561"/>
        <dbReference type="Rhea" id="RHEA-COMP:9562"/>
        <dbReference type="ChEBI" id="CHEBI:15378"/>
        <dbReference type="ChEBI" id="CHEBI:17757"/>
        <dbReference type="ChEBI" id="CHEBI:57540"/>
        <dbReference type="ChEBI" id="CHEBI:57945"/>
        <dbReference type="ChEBI" id="CHEBI:62192"/>
    </reaction>
</comment>
<comment type="catalytic activity">
    <reaction evidence="1">
        <text>a plastoquinone + NADPH + (n+1) H(+)(in) = a plastoquinol + NADP(+) + n H(+)(out)</text>
        <dbReference type="Rhea" id="RHEA:42612"/>
        <dbReference type="Rhea" id="RHEA-COMP:9561"/>
        <dbReference type="Rhea" id="RHEA-COMP:9562"/>
        <dbReference type="ChEBI" id="CHEBI:15378"/>
        <dbReference type="ChEBI" id="CHEBI:17757"/>
        <dbReference type="ChEBI" id="CHEBI:57783"/>
        <dbReference type="ChEBI" id="CHEBI:58349"/>
        <dbReference type="ChEBI" id="CHEBI:62192"/>
    </reaction>
</comment>
<comment type="subunit">
    <text evidence="1">NDH is composed of at least 16 different subunits, 5 of which are encoded in the nucleus.</text>
</comment>
<comment type="subcellular location">
    <subcellularLocation>
        <location evidence="1">Plastid</location>
        <location evidence="1">Chloroplast thylakoid membrane</location>
        <topology evidence="1">Multi-pass membrane protein</topology>
    </subcellularLocation>
</comment>
<comment type="similarity">
    <text evidence="1">Belongs to the complex I subunit 2 family.</text>
</comment>
<geneLocation type="chloroplast"/>
<keyword id="KW-0150">Chloroplast</keyword>
<keyword id="KW-0472">Membrane</keyword>
<keyword id="KW-0520">NAD</keyword>
<keyword id="KW-0521">NADP</keyword>
<keyword id="KW-0934">Plastid</keyword>
<keyword id="KW-0618">Plastoquinone</keyword>
<keyword id="KW-0874">Quinone</keyword>
<keyword id="KW-0793">Thylakoid</keyword>
<keyword id="KW-1278">Translocase</keyword>
<keyword id="KW-0812">Transmembrane</keyword>
<keyword id="KW-1133">Transmembrane helix</keyword>
<keyword id="KW-0813">Transport</keyword>
<organism>
    <name type="scientific">Chloranthus spicatus</name>
    <name type="common">Chulantree</name>
    <name type="synonym">Nigrina spicata</name>
    <dbReference type="NCBI Taxonomy" id="13006"/>
    <lineage>
        <taxon>Eukaryota</taxon>
        <taxon>Viridiplantae</taxon>
        <taxon>Streptophyta</taxon>
        <taxon>Embryophyta</taxon>
        <taxon>Tracheophyta</taxon>
        <taxon>Spermatophyta</taxon>
        <taxon>Magnoliopsida</taxon>
        <taxon>Chloranthales</taxon>
        <taxon>Chloranthaceae</taxon>
        <taxon>Chloranthus</taxon>
    </lineage>
</organism>
<name>NU2C1_CHLSC</name>